<sequence length="284" mass="32471">MEAIKKKMQAMKLEKDNAMDKADALEAQARDANRKADKILEEVQDLKKKPSQVETDFTTTKENLATANKNLEDKEKTLTNTESEVASLNRKVQMIEENLERSEERLGTALTKLGEASHAADEASRMCKVLENRSQQDEERMDQLTNQLKEARMLAEDADGKSDEVSRKMAQVEDDLEVAEDRVKSGDSKIMELEEELKVVGNSLKSLEVSEEKANQRVEEYKRQIKTLTVKLKEAEARAEYAEKYVKKLQKEVDRLEDELGINKDRYRALADEMDQTFAELSGY</sequence>
<feature type="chain" id="PRO_0000205687" description="Tropomyosin Lep s 1.0101">
    <location>
        <begin position="1"/>
        <end position="284"/>
    </location>
</feature>
<feature type="region of interest" description="Disordered" evidence="4">
    <location>
        <begin position="155"/>
        <end position="187"/>
    </location>
</feature>
<feature type="coiled-coil region" evidence="3">
    <location>
        <begin position="1"/>
        <end position="273"/>
    </location>
</feature>
<feature type="compositionally biased region" description="Basic and acidic residues" evidence="4">
    <location>
        <begin position="155"/>
        <end position="171"/>
    </location>
</feature>
<proteinExistence type="evidence at protein level"/>
<comment type="function">
    <text evidence="2">Tropomyosin, in association with the troponin complex, plays a central role in the calcium dependent regulation of muscle contraction.</text>
</comment>
<comment type="subunit">
    <text evidence="1">Homodimer.</text>
</comment>
<comment type="domain">
    <text evidence="7">The molecule is in a coiled coil structure that is formed by 2 polypeptide chains. The sequence exhibits a prominent seven-residues periodicity.</text>
</comment>
<comment type="allergen">
    <text evidence="5">Causes an allergic reaction in human. Binds to IgE in 7% of the 133 patients allergic to arthropods including shrimp, house fly, household insects, mosquito, cockroach, spider and mites. Induces histamine release from basophils that are passively sensitized with IgE from silverfish tropomyosin-allergic patient.</text>
</comment>
<comment type="similarity">
    <text evidence="7">Belongs to the tropomyosin family.</text>
</comment>
<reference key="1">
    <citation type="journal article" date="2005" name="Clin. Exp. Allergy">
        <title>Immunological characterization of a recombinant tropomyosin from a new indoor source, Lepisma saccharina.</title>
        <authorList>
            <person name="Barletta B."/>
            <person name="Butteroni C."/>
            <person name="Puggioni E.M."/>
            <person name="Iacovacci P."/>
            <person name="Afferni C."/>
            <person name="Tinghino R."/>
            <person name="Ariano R."/>
            <person name="Panzani R.C."/>
            <person name="Pini C."/>
            <person name="Di Felice G."/>
        </authorList>
    </citation>
    <scope>NUCLEOTIDE SEQUENCE [MRNA]</scope>
    <scope>ALLERGEN</scope>
</reference>
<keyword id="KW-0020">Allergen</keyword>
<keyword id="KW-0175">Coiled coil</keyword>
<keyword id="KW-0514">Muscle protein</keyword>
<keyword id="KW-0677">Repeat</keyword>
<dbReference type="EMBL" id="AJ309202">
    <property type="protein sequence ID" value="CAC84590.2"/>
    <property type="molecule type" value="mRNA"/>
</dbReference>
<dbReference type="SMR" id="Q8T380"/>
<dbReference type="Allergome" id="3352">
    <property type="allergen name" value="Lep s 1.0101"/>
</dbReference>
<dbReference type="Allergome" id="852">
    <property type="allergen name" value="Lep s 1"/>
</dbReference>
<dbReference type="GO" id="GO:0042803">
    <property type="term" value="F:protein homodimerization activity"/>
    <property type="evidence" value="ECO:0000250"/>
    <property type="project" value="UniProtKB"/>
</dbReference>
<dbReference type="GO" id="GO:0006937">
    <property type="term" value="P:regulation of muscle contraction"/>
    <property type="evidence" value="ECO:0000250"/>
    <property type="project" value="UniProtKB"/>
</dbReference>
<dbReference type="FunFam" id="1.20.5.170:FF:000005">
    <property type="entry name" value="Tropomyosin alpha-1 chain"/>
    <property type="match status" value="1"/>
</dbReference>
<dbReference type="FunFam" id="1.20.5.170:FF:000001">
    <property type="entry name" value="Tropomyosin alpha-1 chain isoform 1"/>
    <property type="match status" value="1"/>
</dbReference>
<dbReference type="FunFam" id="1.20.5.340:FF:000001">
    <property type="entry name" value="Tropomyosin alpha-1 chain isoform 2"/>
    <property type="match status" value="1"/>
</dbReference>
<dbReference type="Gene3D" id="1.20.5.170">
    <property type="match status" value="2"/>
</dbReference>
<dbReference type="Gene3D" id="1.20.5.340">
    <property type="match status" value="1"/>
</dbReference>
<dbReference type="InterPro" id="IPR000533">
    <property type="entry name" value="Tropomyosin"/>
</dbReference>
<dbReference type="PANTHER" id="PTHR19269">
    <property type="entry name" value="TROPOMYOSIN"/>
    <property type="match status" value="1"/>
</dbReference>
<dbReference type="Pfam" id="PF00261">
    <property type="entry name" value="Tropomyosin"/>
    <property type="match status" value="1"/>
</dbReference>
<dbReference type="PRINTS" id="PR00194">
    <property type="entry name" value="TROPOMYOSIN"/>
</dbReference>
<dbReference type="SUPFAM" id="SSF57997">
    <property type="entry name" value="Tropomyosin"/>
    <property type="match status" value="1"/>
</dbReference>
<dbReference type="PROSITE" id="PS00326">
    <property type="entry name" value="TROPOMYOSIN"/>
    <property type="match status" value="1"/>
</dbReference>
<organism>
    <name type="scientific">Lepisma saccharinum</name>
    <name type="common">Silverfish</name>
    <dbReference type="NCBI Taxonomy" id="50586"/>
    <lineage>
        <taxon>Eukaryota</taxon>
        <taxon>Metazoa</taxon>
        <taxon>Ecdysozoa</taxon>
        <taxon>Arthropoda</taxon>
        <taxon>Hexapoda</taxon>
        <taxon>Insecta</taxon>
        <taxon>Zygentoma</taxon>
        <taxon>Lepismatidae</taxon>
        <taxon>Lepisma</taxon>
    </lineage>
</organism>
<protein>
    <recommendedName>
        <fullName evidence="7">Tropomyosin Lep s 1.0101</fullName>
    </recommendedName>
    <alternativeName>
        <fullName evidence="6">Allergen Lep s 1</fullName>
    </alternativeName>
    <alternativeName>
        <fullName evidence="6">Tropomyosin Lep s 1</fullName>
    </alternativeName>
    <allergenName evidence="7">Lep s 1.0101</allergenName>
</protein>
<name>TPM_LEPSA</name>
<evidence type="ECO:0000250" key="1">
    <source>
        <dbReference type="UniProtKB" id="A2V735"/>
    </source>
</evidence>
<evidence type="ECO:0000250" key="2">
    <source>
        <dbReference type="UniProtKB" id="Q22866"/>
    </source>
</evidence>
<evidence type="ECO:0000255" key="3"/>
<evidence type="ECO:0000256" key="4">
    <source>
        <dbReference type="SAM" id="MobiDB-lite"/>
    </source>
</evidence>
<evidence type="ECO:0000269" key="5">
    <source>
    </source>
</evidence>
<evidence type="ECO:0000303" key="6">
    <source>
    </source>
</evidence>
<evidence type="ECO:0000305" key="7"/>
<accession>Q8T380</accession>